<protein>
    <recommendedName>
        <fullName evidence="27">RING-box protein 2</fullName>
        <shortName evidence="27">Rbx2</shortName>
        <ecNumber evidence="10 20 21">2.3.2.27</ecNumber>
        <ecNumber evidence="11">2.3.2.32</ecNumber>
    </recommendedName>
    <alternativeName>
        <fullName evidence="28">CKII beta-binding protein 1</fullName>
        <shortName evidence="28">CKBBP1</shortName>
    </alternativeName>
    <alternativeName>
        <fullName>RING finger protein 7</fullName>
    </alternativeName>
    <alternativeName>
        <fullName evidence="25">Regulator of cullins 2</fullName>
    </alternativeName>
    <alternativeName>
        <fullName evidence="26">Sensitive to apoptosis gene protein</fullName>
    </alternativeName>
</protein>
<feature type="initiator methionine" description="Removed" evidence="33">
    <location>
        <position position="1"/>
    </location>
</feature>
<feature type="chain" id="PRO_0000056023" description="RING-box protein 2">
    <location>
        <begin position="2"/>
        <end position="113"/>
    </location>
</feature>
<feature type="zinc finger region" description="RING-type" evidence="2">
    <location>
        <begin position="61"/>
        <end position="103"/>
    </location>
</feature>
<feature type="region of interest" description="Disordered" evidence="3">
    <location>
        <begin position="1"/>
        <end position="26"/>
    </location>
</feature>
<feature type="binding site" evidence="21 32">
    <location>
        <position position="50"/>
    </location>
    <ligand>
        <name>Zn(2+)</name>
        <dbReference type="ChEBI" id="CHEBI:29105"/>
        <label>1</label>
    </ligand>
</feature>
<feature type="binding site" evidence="21 32">
    <location>
        <position position="53"/>
    </location>
    <ligand>
        <name>Zn(2+)</name>
        <dbReference type="ChEBI" id="CHEBI:29105"/>
        <label>1</label>
    </ligand>
</feature>
<feature type="binding site" evidence="21 32">
    <location>
        <position position="61"/>
    </location>
    <ligand>
        <name>Zn(2+)</name>
        <dbReference type="ChEBI" id="CHEBI:29105"/>
        <label>3</label>
    </ligand>
</feature>
<feature type="binding site" evidence="21 32">
    <location>
        <position position="64"/>
    </location>
    <ligand>
        <name>Zn(2+)</name>
        <dbReference type="ChEBI" id="CHEBI:29105"/>
        <label>3</label>
    </ligand>
</feature>
<feature type="binding site" evidence="21 32">
    <location>
        <position position="73"/>
    </location>
    <ligand>
        <name>Zn(2+)</name>
        <dbReference type="ChEBI" id="CHEBI:29105"/>
        <label>3</label>
    </ligand>
</feature>
<feature type="binding site" evidence="21 32">
    <location>
        <position position="80"/>
    </location>
    <ligand>
        <name>Zn(2+)</name>
        <dbReference type="ChEBI" id="CHEBI:29105"/>
        <label>2</label>
    </ligand>
</feature>
<feature type="binding site" evidence="21 32">
    <location>
        <position position="82"/>
    </location>
    <ligand>
        <name>Zn(2+)</name>
        <dbReference type="ChEBI" id="CHEBI:29105"/>
        <label>2</label>
    </ligand>
</feature>
<feature type="binding site" evidence="21 32">
    <location>
        <position position="85"/>
    </location>
    <ligand>
        <name>Zn(2+)</name>
        <dbReference type="ChEBI" id="CHEBI:29105"/>
        <label>1</label>
    </ligand>
</feature>
<feature type="binding site" evidence="21 32">
    <location>
        <position position="87"/>
    </location>
    <ligand>
        <name>Zn(2+)</name>
        <dbReference type="ChEBI" id="CHEBI:29105"/>
        <label>3</label>
    </ligand>
</feature>
<feature type="binding site" evidence="21 32">
    <location>
        <position position="88"/>
    </location>
    <ligand>
        <name>Zn(2+)</name>
        <dbReference type="ChEBI" id="CHEBI:29105"/>
        <label>1</label>
    </ligand>
</feature>
<feature type="binding site" evidence="21 32">
    <location>
        <position position="99"/>
    </location>
    <ligand>
        <name>Zn(2+)</name>
        <dbReference type="ChEBI" id="CHEBI:29105"/>
        <label>2</label>
    </ligand>
</feature>
<feature type="binding site" evidence="21 32">
    <location>
        <position position="102"/>
    </location>
    <ligand>
        <name>Zn(2+)</name>
        <dbReference type="ChEBI" id="CHEBI:29105"/>
        <label>2</label>
    </ligand>
</feature>
<feature type="modified residue" description="N-acetylalanine" evidence="33">
    <location>
        <position position="2"/>
    </location>
</feature>
<feature type="modified residue" description="Phosphothreonine; by CK2" evidence="9 10">
    <location>
        <position position="10"/>
    </location>
</feature>
<feature type="splice variant" id="VSP_041444" description="In isoform 3." evidence="29">
    <original>VMDACLRCQAENKQEDCVVVWGECNHSFHNCCMSLWVKQNNRCPLCQQDWVVQRIGK</original>
    <variation>MPVLDVKLKTNKRTVLWSGENVIIPSTTAACPCG</variation>
    <location>
        <begin position="57"/>
        <end position="113"/>
    </location>
</feature>
<feature type="splice variant" id="VSP_044525" description="In isoform 4." evidence="30">
    <location>
        <begin position="59"/>
        <end position="74"/>
    </location>
</feature>
<feature type="splice variant" id="VSP_008449" description="In isoform 2." evidence="27 29">
    <original>ACLRCQAENKQEDCVVVWGECNHSFHNCCMSLWVKQNNRCPLCQQDWVVQRIGK</original>
    <variation>EGIGVRNWSEALNLINASEMGFDCRSGSTALAVPSVSLASHQPCLDDHR</variation>
    <location>
        <begin position="60"/>
        <end position="113"/>
    </location>
</feature>
<feature type="mutagenesis site" description="Abolished phosphorylation by CK2, leading to increased protein stability. Does not affect its subcellular location of E3 ubiquitin-protein ligase activity." evidence="10">
    <original>T</original>
    <variation>A</variation>
    <location>
        <position position="10"/>
    </location>
</feature>
<feature type="mutagenesis site" description="Mimics phosphorylation; leading to decreased protein stability." evidence="10">
    <original>T</original>
    <variation>E</variation>
    <location>
        <position position="10"/>
    </location>
</feature>
<feature type="sequence conflict" description="In Ref. 2; AAD30147." evidence="30" ref="2">
    <original>K</original>
    <variation>T</variation>
    <location>
        <position position="23"/>
    </location>
</feature>
<feature type="strand" evidence="35">
    <location>
        <begin position="30"/>
        <end position="36"/>
    </location>
</feature>
<feature type="strand" evidence="35">
    <location>
        <begin position="39"/>
        <end position="43"/>
    </location>
</feature>
<feature type="strand" evidence="35">
    <location>
        <begin position="51"/>
        <end position="53"/>
    </location>
</feature>
<feature type="helix" evidence="35">
    <location>
        <begin position="62"/>
        <end position="67"/>
    </location>
</feature>
<feature type="turn" evidence="34">
    <location>
        <begin position="70"/>
        <end position="72"/>
    </location>
</feature>
<feature type="strand" evidence="35">
    <location>
        <begin position="75"/>
        <end position="78"/>
    </location>
</feature>
<feature type="strand" evidence="34">
    <location>
        <begin position="83"/>
        <end position="85"/>
    </location>
</feature>
<feature type="helix" evidence="35">
    <location>
        <begin position="86"/>
        <end position="95"/>
    </location>
</feature>
<feature type="strand" evidence="35">
    <location>
        <begin position="100"/>
        <end position="102"/>
    </location>
</feature>
<feature type="strand" evidence="35">
    <location>
        <begin position="108"/>
        <end position="111"/>
    </location>
</feature>
<comment type="function">
    <text evidence="1 4 11 12 16 18 20 21 22 23 24">Catalytic component of multiple cullin-5-RING E3 ubiquitin-protein ligase complexes (ECS complexes), which mediate the ubiquitination and subsequent proteasomal degradation of target proteins (PubMed:21980433, PubMed:33268465, PubMed:38418882, PubMed:38574733, PubMed:35512830). It is thereby involved in various biological processes, such as cell cycle progression, signal transduction and transcription (PubMed:21980433, PubMed:33268465, PubMed:38418882, PubMed:38574733). The functional specificity of the E3 ubiquitin-protein ligase ECS complexes depend on the variable SOCS box-containing substrate recognition component (PubMed:21980433, PubMed:33268465). Within ECS complexes, RNF7/RBX2 recruits the E2 ubiquitination enzyme to the complex via its RING-type and brings it into close proximity to the substrate (PubMed:34518685). Catalytic subunit of various SOCS-containing ECS complexes, such as the ECS(SOCS7) complex, that regulate reelin signaling by mediating ubiquitination and degradation of DAB1 (By similarity). The ECS(SOCS2) complex mediates the ubiquitination and subsequent proteasomal degradation of phosphorylated EPOR and GHR (PubMed:21980433, PubMed:25505247). Promotes ubiquitination and degradation of NF1, thereby regulating Ras protein signal transduction (By similarity). As part of the ECS(ASB9) complex, catalyzes ubiquitination and degradation of CKB (PubMed:33268465). The ECS(SPSB3) complex catalyzes ubiquitination of nuclear CGAS (PubMed:38418882). As part of the ECS(RAB40C) complex, mediates ANKRD28 ubiquitination and degradation, thereby inhibiting protein phosphatase 6 (PP6) complex activity and focal adhesion assembly during cell migration (PubMed:35512830). As part of some ECS complex, catalyzes 'Lys-11'-linked ubiquitination and degradation of BTRC (PubMed:27910872). ECS complexes and ARIH2 collaborate in tandem to mediate ubiquitination of target proteins; ARIH2 mediating addition of the first ubiquitin on CRLs targets (PubMed:34518685, PubMed:38418882). Specifically catalyzes the neddylation of CUL5 via its interaction with UBE2F (PubMed:19250909). Does not catalyze neddylation of other cullins (CUL1, CUL2, CUL3, CUL4A or CUL4B) (PubMed:19250909). May play a role in protecting cells from apoptosis induced by redox agents (PubMed:10082581).</text>
</comment>
<comment type="function">
    <molecule>Isoform 2</molecule>
    <text evidence="8">Inactive.</text>
</comment>
<comment type="function">
    <text evidence="13 14">(Microbial infection) Following infection by HIV-1 virus, catalytic component of a cullin-5-RING E3 ubiquitin-protein ligase complex (ECS complex) hijacked by the HIV-1 Vif protein, which catalyzes ubiquitination and degradation of APOBEC3F and APOBEC3G.</text>
</comment>
<comment type="catalytic activity">
    <reaction evidence="10 20 21">
        <text>S-ubiquitinyl-[E2 ubiquitin-conjugating enzyme]-L-cysteine + [acceptor protein]-L-lysine = [E2 ubiquitin-conjugating enzyme]-L-cysteine + N(6)-ubiquitinyl-[acceptor protein]-L-lysine.</text>
        <dbReference type="EC" id="2.3.2.27"/>
    </reaction>
</comment>
<comment type="catalytic activity">
    <reaction evidence="11 14">
        <text>S-[NEDD8-protein]-yl-[E2 NEDD8-conjugating enzyme]-L-cysteine + [cullin]-L-lysine = [E2 NEDD8-conjugating enzyme]-L-cysteine + N(6)-[NEDD8-protein]-yl-[cullin]-L-lysine.</text>
        <dbReference type="EC" id="2.3.2.32"/>
    </reaction>
</comment>
<comment type="pathway">
    <text evidence="12 16 18 20 23 24">Protein modification; protein ubiquitination.</text>
</comment>
<comment type="pathway">
    <text evidence="11 14">Protein modification; protein neddylation.</text>
</comment>
<comment type="subunit">
    <text evidence="5 6 7 11 12 15 16 17 18 19 20 22 23 24">Catalytic component of multiple cullin-5-RING E3 ubiquitin-protein ligase complexes (ECS complexes, also named CRL5 complexes) composed of CUL5, Elongin BC (ELOB and ELOC), RNF7/RBX2 and a variable SOCS box domain-containing protein as substrate-specific recognition component (PubMed:10230407, PubMed:21980433, PubMed:24337577, PubMed:25505247, PubMed:27910872, PubMed:31387940, PubMed:33268465, PubMed:38418882, PubMed:38574733, PubMed:35512830). Also interacts (with lower preference) with CUL1, CUL2, CUL3, CUL4A and CUL4B; additional evidence is however required to confirm this result in vivo (PubMed:10230407, PubMed:10851089). Interacts with UBE2F (PubMed:19250909). Interacts with CSNK2B, the interaction is not affected by phosphorylation by CK2 (PubMed:10512750). May also interact with DCUN1D1, DCUN1D2, DCUN1D3, DCUN1D4 and DCUN1D5 (PubMed:26906416).</text>
</comment>
<comment type="subunit">
    <text evidence="13">(Microbial infection) Following infection by HIV-1 virus, component of a cullin-5-RING E3 ubiquitin-protein ligase complex (ECS complex) hijacked by the HIV-1 Vif protein.</text>
</comment>
<comment type="interaction">
    <interactant intactId="EBI-398632">
        <id>Q9UBF6</id>
    </interactant>
    <interactant intactId="EBI-2323092">
        <id>Q9Y576</id>
        <label>ASB1</label>
    </interactant>
    <organismsDiffer>false</organismsDiffer>
    <experiments>4</experiments>
</comment>
<comment type="interaction">
    <interactant intactId="EBI-398632">
        <id>Q9UBF6</id>
    </interactant>
    <interactant intactId="EBI-6425205">
        <id>Q9NWX5</id>
        <label>ASB6</label>
    </interactant>
    <organismsDiffer>false</organismsDiffer>
    <experiments>4</experiments>
</comment>
<comment type="interaction">
    <interactant intactId="EBI-398632">
        <id>Q9UBF6</id>
    </interactant>
    <interactant intactId="EBI-3916346">
        <id>Q9H672</id>
        <label>ASB7</label>
    </interactant>
    <organismsDiffer>false</organismsDiffer>
    <experiments>4</experiments>
</comment>
<comment type="interaction">
    <interactant intactId="EBI-398632">
        <id>Q9UBF6</id>
    </interactant>
    <interactant intactId="EBI-1057139">
        <id>Q93034</id>
        <label>CUL5</label>
    </interactant>
    <organismsDiffer>false</organismsDiffer>
    <experiments>11</experiments>
</comment>
<comment type="interaction">
    <interactant intactId="EBI-398632">
        <id>Q9UBF6</id>
    </interactant>
    <interactant intactId="EBI-81279">
        <id>Q9Y6K9</id>
        <label>IKBKG</label>
    </interactant>
    <organismsDiffer>false</organismsDiffer>
    <experiments>3</experiments>
</comment>
<comment type="interaction">
    <interactant intactId="EBI-398632">
        <id>Q9UBF6</id>
    </interactant>
    <interactant intactId="EBI-358311">
        <id>P12004</id>
        <label>PCNA</label>
    </interactant>
    <organismsDiffer>false</organismsDiffer>
    <experiments>3</experiments>
</comment>
<comment type="interaction">
    <interactant intactId="EBI-398632">
        <id>Q9UBF6</id>
    </interactant>
    <interactant intactId="EBI-779991">
        <id>P12504</id>
        <label>vif</label>
    </interactant>
    <organismsDiffer>true</organismsDiffer>
    <experiments>4</experiments>
</comment>
<comment type="subcellular location">
    <subcellularLocation>
        <location evidence="4 10">Cytoplasm</location>
    </subcellularLocation>
    <subcellularLocation>
        <location evidence="4 10">Nucleus</location>
    </subcellularLocation>
</comment>
<comment type="alternative products">
    <event type="alternative splicing"/>
    <isoform>
        <id>Q9UBF6-1</id>
        <name>1</name>
        <sequence type="displayed"/>
    </isoform>
    <isoform>
        <id>Q9UBF6-2</id>
        <name>2</name>
        <name evidence="27">SAG-v</name>
        <sequence type="described" ref="VSP_008449"/>
    </isoform>
    <isoform>
        <id>Q9UBF6-3</id>
        <name>3</name>
        <sequence type="described" ref="VSP_041444"/>
    </isoform>
    <isoform>
        <id>Q9UBF6-4</id>
        <name>4</name>
        <sequence type="described" ref="VSP_044525"/>
    </isoform>
</comment>
<comment type="tissue specificity">
    <text evidence="6">Expressed in heart, liver, skeletal muscle and pancreas. At very low levels expressed in brain, placenta and lung.</text>
</comment>
<comment type="induction">
    <text evidence="4">By 1,10-phenanthroline.</text>
</comment>
<comment type="domain">
    <text evidence="21">The RING-type zinc finger domain is essential for ubiquitin ligase activity (PubMed:34518685). It coordinates an additional third zinc ion (PubMed:34518685).</text>
</comment>
<comment type="PTM">
    <text evidence="6 9 10">Phosphorylation at Thr-10 by CK2 promotes its degradation by the proteasome.</text>
</comment>
<comment type="similarity">
    <text evidence="30">Belongs to the RING-box family.</text>
</comment>
<comment type="online information" name="Atlas of Genetics and Cytogenetics in Oncology and Haematology">
    <link uri="https://atlasgeneticsoncology.org/gene/44108/RNF7"/>
</comment>
<keyword id="KW-0002">3D-structure</keyword>
<keyword id="KW-0007">Acetylation</keyword>
<keyword id="KW-0025">Alternative splicing</keyword>
<keyword id="KW-0963">Cytoplasm</keyword>
<keyword id="KW-0479">Metal-binding</keyword>
<keyword id="KW-0539">Nucleus</keyword>
<keyword id="KW-0597">Phosphoprotein</keyword>
<keyword id="KW-1267">Proteomics identification</keyword>
<keyword id="KW-1185">Reference proteome</keyword>
<keyword id="KW-0808">Transferase</keyword>
<keyword id="KW-0833">Ubl conjugation pathway</keyword>
<keyword id="KW-0862">Zinc</keyword>
<keyword id="KW-0863">Zinc-finger</keyword>
<organism>
    <name type="scientific">Homo sapiens</name>
    <name type="common">Human</name>
    <dbReference type="NCBI Taxonomy" id="9606"/>
    <lineage>
        <taxon>Eukaryota</taxon>
        <taxon>Metazoa</taxon>
        <taxon>Chordata</taxon>
        <taxon>Craniata</taxon>
        <taxon>Vertebrata</taxon>
        <taxon>Euteleostomi</taxon>
        <taxon>Mammalia</taxon>
        <taxon>Eutheria</taxon>
        <taxon>Euarchontoglires</taxon>
        <taxon>Primates</taxon>
        <taxon>Haplorrhini</taxon>
        <taxon>Catarrhini</taxon>
        <taxon>Hominidae</taxon>
        <taxon>Homo</taxon>
    </lineage>
</organism>
<dbReference type="EC" id="2.3.2.27" evidence="10 20 21"/>
<dbReference type="EC" id="2.3.2.32" evidence="11"/>
<dbReference type="EMBL" id="AF164679">
    <property type="protein sequence ID" value="AAD55984.1"/>
    <property type="molecule type" value="mRNA"/>
</dbReference>
<dbReference type="EMBL" id="AF142060">
    <property type="protein sequence ID" value="AAD30147.1"/>
    <property type="molecule type" value="mRNA"/>
</dbReference>
<dbReference type="EMBL" id="AF092878">
    <property type="protein sequence ID" value="AAD25962.1"/>
    <property type="molecule type" value="mRNA"/>
</dbReference>
<dbReference type="EMBL" id="AF312226">
    <property type="protein sequence ID" value="AAK37450.1"/>
    <property type="molecule type" value="mRNA"/>
</dbReference>
<dbReference type="EMBL" id="BT007348">
    <property type="protein sequence ID" value="AAP36012.1"/>
    <property type="molecule type" value="mRNA"/>
</dbReference>
<dbReference type="EMBL" id="AK289894">
    <property type="protein sequence ID" value="BAF82583.1"/>
    <property type="molecule type" value="mRNA"/>
</dbReference>
<dbReference type="EMBL" id="DB272382">
    <property type="status" value="NOT_ANNOTATED_CDS"/>
    <property type="molecule type" value="mRNA"/>
</dbReference>
<dbReference type="EMBL" id="AC112771">
    <property type="status" value="NOT_ANNOTATED_CDS"/>
    <property type="molecule type" value="Genomic_DNA"/>
</dbReference>
<dbReference type="EMBL" id="CH471052">
    <property type="protein sequence ID" value="EAW78991.1"/>
    <property type="molecule type" value="Genomic_DNA"/>
</dbReference>
<dbReference type="EMBL" id="CH471052">
    <property type="protein sequence ID" value="EAW78992.1"/>
    <property type="molecule type" value="Genomic_DNA"/>
</dbReference>
<dbReference type="EMBL" id="CH471052">
    <property type="protein sequence ID" value="EAW78994.1"/>
    <property type="molecule type" value="Genomic_DNA"/>
</dbReference>
<dbReference type="EMBL" id="CH471052">
    <property type="protein sequence ID" value="EAW78995.1"/>
    <property type="molecule type" value="Genomic_DNA"/>
</dbReference>
<dbReference type="EMBL" id="CH471052">
    <property type="protein sequence ID" value="EAW78996.1"/>
    <property type="molecule type" value="Genomic_DNA"/>
</dbReference>
<dbReference type="EMBL" id="BC005966">
    <property type="protein sequence ID" value="AAH05966.1"/>
    <property type="molecule type" value="mRNA"/>
</dbReference>
<dbReference type="EMBL" id="BC008627">
    <property type="protein sequence ID" value="AAH08627.1"/>
    <property type="molecule type" value="mRNA"/>
</dbReference>
<dbReference type="CCDS" id="CCDS3118.1">
    <molecule id="Q9UBF6-1"/>
</dbReference>
<dbReference type="CCDS" id="CCDS43158.1">
    <molecule id="Q9UBF6-3"/>
</dbReference>
<dbReference type="CCDS" id="CCDS56283.1">
    <molecule id="Q9UBF6-4"/>
</dbReference>
<dbReference type="RefSeq" id="NP_001188299.1">
    <molecule id="Q9UBF6-4"/>
    <property type="nucleotide sequence ID" value="NM_001201370.2"/>
</dbReference>
<dbReference type="RefSeq" id="NP_055060.1">
    <molecule id="Q9UBF6-1"/>
    <property type="nucleotide sequence ID" value="NM_014245.5"/>
</dbReference>
<dbReference type="RefSeq" id="NP_899060.1">
    <molecule id="Q9UBF6-3"/>
    <property type="nucleotide sequence ID" value="NM_183237.3"/>
</dbReference>
<dbReference type="PDB" id="2ECL">
    <property type="method" value="NMR"/>
    <property type="chains" value="A=40-113"/>
</dbReference>
<dbReference type="PDB" id="7ONI">
    <property type="method" value="EM"/>
    <property type="resolution" value="3.40 A"/>
    <property type="chains" value="R=5-113"/>
</dbReference>
<dbReference type="PDBsum" id="2ECL"/>
<dbReference type="PDBsum" id="7ONI"/>
<dbReference type="BMRB" id="Q9UBF6"/>
<dbReference type="EMDB" id="EMD-12995"/>
<dbReference type="EMDB" id="EMD-27885"/>
<dbReference type="EMDB" id="EMD-29490"/>
<dbReference type="SMR" id="Q9UBF6"/>
<dbReference type="BioGRID" id="114977">
    <property type="interactions" value="152"/>
</dbReference>
<dbReference type="CORUM" id="Q9UBF6"/>
<dbReference type="FunCoup" id="Q9UBF6">
    <property type="interactions" value="2668"/>
</dbReference>
<dbReference type="IntAct" id="Q9UBF6">
    <property type="interactions" value="80"/>
</dbReference>
<dbReference type="MINT" id="Q9UBF6"/>
<dbReference type="STRING" id="9606.ENSP00000273480"/>
<dbReference type="GlyGen" id="Q9UBF6">
    <property type="glycosylation" value="1 site, 1 O-linked glycan (1 site)"/>
</dbReference>
<dbReference type="iPTMnet" id="Q9UBF6"/>
<dbReference type="MetOSite" id="Q9UBF6"/>
<dbReference type="PhosphoSitePlus" id="Q9UBF6"/>
<dbReference type="BioMuta" id="RNF7"/>
<dbReference type="DMDM" id="37538003"/>
<dbReference type="jPOST" id="Q9UBF6"/>
<dbReference type="MassIVE" id="Q9UBF6"/>
<dbReference type="PaxDb" id="9606-ENSP00000273480"/>
<dbReference type="PeptideAtlas" id="Q9UBF6"/>
<dbReference type="ProteomicsDB" id="12270"/>
<dbReference type="ProteomicsDB" id="83956">
    <molecule id="Q9UBF6-1"/>
</dbReference>
<dbReference type="ProteomicsDB" id="83957">
    <molecule id="Q9UBF6-2"/>
</dbReference>
<dbReference type="ProteomicsDB" id="83958">
    <molecule id="Q9UBF6-3"/>
</dbReference>
<dbReference type="Pumba" id="Q9UBF6"/>
<dbReference type="Antibodypedia" id="18025">
    <property type="antibodies" value="184 antibodies from 32 providers"/>
</dbReference>
<dbReference type="DNASU" id="9616"/>
<dbReference type="Ensembl" id="ENST00000273480.4">
    <molecule id="Q9UBF6-1"/>
    <property type="protein sequence ID" value="ENSP00000273480.3"/>
    <property type="gene ID" value="ENSG00000114125.14"/>
</dbReference>
<dbReference type="Ensembl" id="ENST00000393000.3">
    <molecule id="Q9UBF6-3"/>
    <property type="protein sequence ID" value="ENSP00000376725.3"/>
    <property type="gene ID" value="ENSG00000114125.14"/>
</dbReference>
<dbReference type="Ensembl" id="ENST00000477012.5">
    <molecule id="Q9UBF6-2"/>
    <property type="protein sequence ID" value="ENSP00000419339.1"/>
    <property type="gene ID" value="ENSG00000114125.14"/>
</dbReference>
<dbReference type="Ensembl" id="ENST00000480908.1">
    <molecule id="Q9UBF6-4"/>
    <property type="protein sequence ID" value="ENSP00000419084.1"/>
    <property type="gene ID" value="ENSG00000114125.14"/>
</dbReference>
<dbReference type="GeneID" id="9616"/>
<dbReference type="KEGG" id="hsa:9616"/>
<dbReference type="MANE-Select" id="ENST00000273480.4">
    <property type="protein sequence ID" value="ENSP00000273480.3"/>
    <property type="RefSeq nucleotide sequence ID" value="NM_014245.5"/>
    <property type="RefSeq protein sequence ID" value="NP_055060.1"/>
</dbReference>
<dbReference type="UCSC" id="uc003euc.4">
    <molecule id="Q9UBF6-1"/>
    <property type="organism name" value="human"/>
</dbReference>
<dbReference type="AGR" id="HGNC:10070"/>
<dbReference type="CTD" id="9616"/>
<dbReference type="DisGeNET" id="9616"/>
<dbReference type="GeneCards" id="RNF7"/>
<dbReference type="HGNC" id="HGNC:10070">
    <property type="gene designation" value="RNF7"/>
</dbReference>
<dbReference type="HPA" id="ENSG00000114125">
    <property type="expression patterns" value="Low tissue specificity"/>
</dbReference>
<dbReference type="MIM" id="603863">
    <property type="type" value="gene"/>
</dbReference>
<dbReference type="neXtProt" id="NX_Q9UBF6"/>
<dbReference type="OpenTargets" id="ENSG00000114125"/>
<dbReference type="PharmGKB" id="PA34444"/>
<dbReference type="VEuPathDB" id="HostDB:ENSG00000114125"/>
<dbReference type="eggNOG" id="KOG2930">
    <property type="taxonomic scope" value="Eukaryota"/>
</dbReference>
<dbReference type="GeneTree" id="ENSGT00940000155481"/>
<dbReference type="HOGENOM" id="CLU_115512_2_2_1"/>
<dbReference type="InParanoid" id="Q9UBF6"/>
<dbReference type="OMA" id="RQNNRCP"/>
<dbReference type="OrthoDB" id="8962942at2759"/>
<dbReference type="PAN-GO" id="Q9UBF6">
    <property type="GO annotations" value="6 GO annotations based on evolutionary models"/>
</dbReference>
<dbReference type="PhylomeDB" id="Q9UBF6"/>
<dbReference type="TreeFam" id="TF351049"/>
<dbReference type="PathwayCommons" id="Q9UBF6"/>
<dbReference type="Reactome" id="R-HSA-8951664">
    <property type="pathway name" value="Neddylation"/>
</dbReference>
<dbReference type="Reactome" id="R-HSA-9705462">
    <property type="pathway name" value="Inactivation of CSF3 (G-CSF) signaling"/>
</dbReference>
<dbReference type="Reactome" id="R-HSA-983168">
    <property type="pathway name" value="Antigen processing: Ubiquitination &amp; Proteasome degradation"/>
</dbReference>
<dbReference type="SignaLink" id="Q9UBF6"/>
<dbReference type="SIGNOR" id="Q9UBF6"/>
<dbReference type="UniPathway" id="UPA00143"/>
<dbReference type="UniPathway" id="UPA00885"/>
<dbReference type="BioGRID-ORCS" id="9616">
    <property type="hits" value="60 hits in 1211 CRISPR screens"/>
</dbReference>
<dbReference type="ChiTaRS" id="RNF7">
    <property type="organism name" value="human"/>
</dbReference>
<dbReference type="EvolutionaryTrace" id="Q9UBF6"/>
<dbReference type="GeneWiki" id="RNF7"/>
<dbReference type="GenomeRNAi" id="9616"/>
<dbReference type="Pharos" id="Q9UBF6">
    <property type="development level" value="Tbio"/>
</dbReference>
<dbReference type="PRO" id="PR:Q9UBF6"/>
<dbReference type="Proteomes" id="UP000005640">
    <property type="component" value="Chromosome 3"/>
</dbReference>
<dbReference type="RNAct" id="Q9UBF6">
    <property type="molecule type" value="protein"/>
</dbReference>
<dbReference type="Bgee" id="ENSG00000114125">
    <property type="expression patterns" value="Expressed in left adrenal gland and 197 other cell types or tissues"/>
</dbReference>
<dbReference type="ExpressionAtlas" id="Q9UBF6">
    <property type="expression patterns" value="baseline and differential"/>
</dbReference>
<dbReference type="GO" id="GO:0031466">
    <property type="term" value="C:Cul5-RING ubiquitin ligase complex"/>
    <property type="evidence" value="ECO:0000314"/>
    <property type="project" value="UniProtKB"/>
</dbReference>
<dbReference type="GO" id="GO:0005737">
    <property type="term" value="C:cytoplasm"/>
    <property type="evidence" value="ECO:0000314"/>
    <property type="project" value="UniProtKB"/>
</dbReference>
<dbReference type="GO" id="GO:0005829">
    <property type="term" value="C:cytosol"/>
    <property type="evidence" value="ECO:0000314"/>
    <property type="project" value="HPA"/>
</dbReference>
<dbReference type="GO" id="GO:0005654">
    <property type="term" value="C:nucleoplasm"/>
    <property type="evidence" value="ECO:0000314"/>
    <property type="project" value="HPA"/>
</dbReference>
<dbReference type="GO" id="GO:0005634">
    <property type="term" value="C:nucleus"/>
    <property type="evidence" value="ECO:0000314"/>
    <property type="project" value="UniProtKB"/>
</dbReference>
<dbReference type="GO" id="GO:0005507">
    <property type="term" value="F:copper ion binding"/>
    <property type="evidence" value="ECO:0000304"/>
    <property type="project" value="ProtInc"/>
</dbReference>
<dbReference type="GO" id="GO:0097602">
    <property type="term" value="F:cullin family protein binding"/>
    <property type="evidence" value="ECO:0000314"/>
    <property type="project" value="MGI"/>
</dbReference>
<dbReference type="GO" id="GO:0061663">
    <property type="term" value="F:NEDD8 ligase activity"/>
    <property type="evidence" value="ECO:0000314"/>
    <property type="project" value="UniProtKB"/>
</dbReference>
<dbReference type="GO" id="GO:0019788">
    <property type="term" value="F:NEDD8 transferase activity"/>
    <property type="evidence" value="ECO:0000304"/>
    <property type="project" value="Reactome"/>
</dbReference>
<dbReference type="GO" id="GO:0061630">
    <property type="term" value="F:ubiquitin protein ligase activity"/>
    <property type="evidence" value="ECO:0000314"/>
    <property type="project" value="UniProtKB"/>
</dbReference>
<dbReference type="GO" id="GO:0008270">
    <property type="term" value="F:zinc ion binding"/>
    <property type="evidence" value="ECO:0000304"/>
    <property type="project" value="ProtInc"/>
</dbReference>
<dbReference type="GO" id="GO:0030968">
    <property type="term" value="P:endoplasmic reticulum unfolded protein response"/>
    <property type="evidence" value="ECO:0000314"/>
    <property type="project" value="UniProt"/>
</dbReference>
<dbReference type="GO" id="GO:0043687">
    <property type="term" value="P:post-translational protein modification"/>
    <property type="evidence" value="ECO:0000304"/>
    <property type="project" value="Reactome"/>
</dbReference>
<dbReference type="GO" id="GO:0043161">
    <property type="term" value="P:proteasome-mediated ubiquitin-dependent protein catabolic process"/>
    <property type="evidence" value="ECO:0000314"/>
    <property type="project" value="UniProtKB"/>
</dbReference>
<dbReference type="GO" id="GO:0070979">
    <property type="term" value="P:protein K11-linked ubiquitination"/>
    <property type="evidence" value="ECO:0000314"/>
    <property type="project" value="UniProtKB"/>
</dbReference>
<dbReference type="GO" id="GO:0045116">
    <property type="term" value="P:protein neddylation"/>
    <property type="evidence" value="ECO:0000314"/>
    <property type="project" value="UniProtKB"/>
</dbReference>
<dbReference type="GO" id="GO:0016567">
    <property type="term" value="P:protein ubiquitination"/>
    <property type="evidence" value="ECO:0000318"/>
    <property type="project" value="GO_Central"/>
</dbReference>
<dbReference type="GO" id="GO:0038026">
    <property type="term" value="P:reelin-mediated signaling pathway"/>
    <property type="evidence" value="ECO:0000250"/>
    <property type="project" value="UniProtKB"/>
</dbReference>
<dbReference type="GO" id="GO:2001222">
    <property type="term" value="P:regulation of neuron migration"/>
    <property type="evidence" value="ECO:0000250"/>
    <property type="project" value="UniProtKB"/>
</dbReference>
<dbReference type="GO" id="GO:0051775">
    <property type="term" value="P:response to redox state"/>
    <property type="evidence" value="ECO:0000304"/>
    <property type="project" value="ProtInc"/>
</dbReference>
<dbReference type="GO" id="GO:0006511">
    <property type="term" value="P:ubiquitin-dependent protein catabolic process"/>
    <property type="evidence" value="ECO:0000318"/>
    <property type="project" value="GO_Central"/>
</dbReference>
<dbReference type="CDD" id="cd16466">
    <property type="entry name" value="RING-H2_RBX2"/>
    <property type="match status" value="1"/>
</dbReference>
<dbReference type="FunFam" id="3.30.40.10:FF:000156">
    <property type="entry name" value="RING-box protein 2 isoform X1"/>
    <property type="match status" value="1"/>
</dbReference>
<dbReference type="Gene3D" id="3.30.40.10">
    <property type="entry name" value="Zinc/RING finger domain, C3HC4 (zinc finger)"/>
    <property type="match status" value="1"/>
</dbReference>
<dbReference type="InterPro" id="IPR051031">
    <property type="entry name" value="RING-box_E3_Ubiquitin_Ligase"/>
</dbReference>
<dbReference type="InterPro" id="IPR001841">
    <property type="entry name" value="Znf_RING"/>
</dbReference>
<dbReference type="InterPro" id="IPR013083">
    <property type="entry name" value="Znf_RING/FYVE/PHD"/>
</dbReference>
<dbReference type="InterPro" id="IPR024766">
    <property type="entry name" value="Znf_RING_H2"/>
</dbReference>
<dbReference type="PANTHER" id="PTHR11210">
    <property type="entry name" value="RING BOX"/>
    <property type="match status" value="1"/>
</dbReference>
<dbReference type="Pfam" id="PF12678">
    <property type="entry name" value="zf-rbx1"/>
    <property type="match status" value="1"/>
</dbReference>
<dbReference type="SUPFAM" id="SSF57850">
    <property type="entry name" value="RING/U-box"/>
    <property type="match status" value="1"/>
</dbReference>
<dbReference type="PROSITE" id="PS50089">
    <property type="entry name" value="ZF_RING_2"/>
    <property type="match status" value="1"/>
</dbReference>
<reference key="1">
    <citation type="journal article" date="1999" name="Biochem. Biophys. Res. Commun.">
        <title>Protein kinase CKII interacts with and phosphorylates the SAG protein containing ring-H2 finger motif.</title>
        <authorList>
            <person name="Son M.-Y."/>
            <person name="Park J.-W."/>
            <person name="Kim Y.-S."/>
            <person name="Kang S.-W."/>
            <person name="Marshak D.R."/>
            <person name="Park W."/>
            <person name="Bae Y.-S."/>
        </authorList>
    </citation>
    <scope>NUCLEOTIDE SEQUENCE [MRNA] (ISOFORM 1)</scope>
    <scope>PHOSPHORYLATION</scope>
    <scope>INTERACTION WITH CSNK2B</scope>
    <scope>TISSUE SPECIFICITY</scope>
</reference>
<reference key="2">
    <citation type="journal article" date="1999" name="Mol. Cell">
        <title>ROC1, a homolog of APC11, represents a family of cullin partners with an associated ubiquitin ligase activity.</title>
        <authorList>
            <person name="Ohta T."/>
            <person name="Michel J.J."/>
            <person name="Schottelius A.J."/>
            <person name="Xiong Y."/>
        </authorList>
    </citation>
    <scope>NUCLEOTIDE SEQUENCE [MRNA] (ISOFORM 1)</scope>
    <scope>INTERACTION WITH CULLINS</scope>
</reference>
<reference key="3">
    <citation type="journal article" date="1999" name="Mol. Cell. Biol.">
        <title>SAG, a novel zinc RING finger protein that protects cells from apoptosis induced by redox agents.</title>
        <authorList>
            <person name="Duan H."/>
            <person name="Wang Y."/>
            <person name="Aviram M."/>
            <person name="Swaroop M."/>
            <person name="Loo J.A."/>
            <person name="Bian J."/>
            <person name="Tian Y."/>
            <person name="Mueller T."/>
            <person name="Bisgaier C.L."/>
            <person name="Sun Y."/>
        </authorList>
    </citation>
    <scope>NUCLEOTIDE SEQUENCE [MRNA] (ISOFORM 1)</scope>
    <scope>FUNCTION</scope>
    <scope>INDUCTION</scope>
    <scope>SUBCELLULAR LOCATION</scope>
</reference>
<reference key="4">
    <citation type="journal article" date="2001" name="DNA Cell Biol.">
        <title>SAG/ROC2/Rbx2/Hrt2, a component of SCF E3 ubiquitin ligase: genomic structure, a splicing variant, and two family pseudogenes.</title>
        <authorList>
            <person name="Swaroop M."/>
            <person name="Gosink M."/>
            <person name="Sun Y."/>
        </authorList>
    </citation>
    <scope>NUCLEOTIDE SEQUENCE [MRNA] (ISOFORM 2)</scope>
    <scope>FUNCTION (ISOFORM 2)</scope>
</reference>
<reference key="5">
    <citation type="submission" date="2003-05" db="EMBL/GenBank/DDBJ databases">
        <title>Cloning of human full-length CDSs in BD Creator(TM) system donor vector.</title>
        <authorList>
            <person name="Kalnine N."/>
            <person name="Chen X."/>
            <person name="Rolfs A."/>
            <person name="Halleck A."/>
            <person name="Hines L."/>
            <person name="Eisenstein S."/>
            <person name="Koundinya M."/>
            <person name="Raphael J."/>
            <person name="Moreira D."/>
            <person name="Kelley T."/>
            <person name="LaBaer J."/>
            <person name="Lin Y."/>
            <person name="Phelan M."/>
            <person name="Farmer A."/>
        </authorList>
    </citation>
    <scope>NUCLEOTIDE SEQUENCE [LARGE SCALE MRNA] (ISOFORM 1)</scope>
</reference>
<reference key="6">
    <citation type="journal article" date="2004" name="Nat. Genet.">
        <title>Complete sequencing and characterization of 21,243 full-length human cDNAs.</title>
        <authorList>
            <person name="Ota T."/>
            <person name="Suzuki Y."/>
            <person name="Nishikawa T."/>
            <person name="Otsuki T."/>
            <person name="Sugiyama T."/>
            <person name="Irie R."/>
            <person name="Wakamatsu A."/>
            <person name="Hayashi K."/>
            <person name="Sato H."/>
            <person name="Nagai K."/>
            <person name="Kimura K."/>
            <person name="Makita H."/>
            <person name="Sekine M."/>
            <person name="Obayashi M."/>
            <person name="Nishi T."/>
            <person name="Shibahara T."/>
            <person name="Tanaka T."/>
            <person name="Ishii S."/>
            <person name="Yamamoto J."/>
            <person name="Saito K."/>
            <person name="Kawai Y."/>
            <person name="Isono Y."/>
            <person name="Nakamura Y."/>
            <person name="Nagahari K."/>
            <person name="Murakami K."/>
            <person name="Yasuda T."/>
            <person name="Iwayanagi T."/>
            <person name="Wagatsuma M."/>
            <person name="Shiratori A."/>
            <person name="Sudo H."/>
            <person name="Hosoiri T."/>
            <person name="Kaku Y."/>
            <person name="Kodaira H."/>
            <person name="Kondo H."/>
            <person name="Sugawara M."/>
            <person name="Takahashi M."/>
            <person name="Kanda K."/>
            <person name="Yokoi T."/>
            <person name="Furuya T."/>
            <person name="Kikkawa E."/>
            <person name="Omura Y."/>
            <person name="Abe K."/>
            <person name="Kamihara K."/>
            <person name="Katsuta N."/>
            <person name="Sato K."/>
            <person name="Tanikawa M."/>
            <person name="Yamazaki M."/>
            <person name="Ninomiya K."/>
            <person name="Ishibashi T."/>
            <person name="Yamashita H."/>
            <person name="Murakawa K."/>
            <person name="Fujimori K."/>
            <person name="Tanai H."/>
            <person name="Kimata M."/>
            <person name="Watanabe M."/>
            <person name="Hiraoka S."/>
            <person name="Chiba Y."/>
            <person name="Ishida S."/>
            <person name="Ono Y."/>
            <person name="Takiguchi S."/>
            <person name="Watanabe S."/>
            <person name="Yosida M."/>
            <person name="Hotuta T."/>
            <person name="Kusano J."/>
            <person name="Kanehori K."/>
            <person name="Takahashi-Fujii A."/>
            <person name="Hara H."/>
            <person name="Tanase T.-O."/>
            <person name="Nomura Y."/>
            <person name="Togiya S."/>
            <person name="Komai F."/>
            <person name="Hara R."/>
            <person name="Takeuchi K."/>
            <person name="Arita M."/>
            <person name="Imose N."/>
            <person name="Musashino K."/>
            <person name="Yuuki H."/>
            <person name="Oshima A."/>
            <person name="Sasaki N."/>
            <person name="Aotsuka S."/>
            <person name="Yoshikawa Y."/>
            <person name="Matsunawa H."/>
            <person name="Ichihara T."/>
            <person name="Shiohata N."/>
            <person name="Sano S."/>
            <person name="Moriya S."/>
            <person name="Momiyama H."/>
            <person name="Satoh N."/>
            <person name="Takami S."/>
            <person name="Terashima Y."/>
            <person name="Suzuki O."/>
            <person name="Nakagawa S."/>
            <person name="Senoh A."/>
            <person name="Mizoguchi H."/>
            <person name="Goto Y."/>
            <person name="Shimizu F."/>
            <person name="Wakebe H."/>
            <person name="Hishigaki H."/>
            <person name="Watanabe T."/>
            <person name="Sugiyama A."/>
            <person name="Takemoto M."/>
            <person name="Kawakami B."/>
            <person name="Yamazaki M."/>
            <person name="Watanabe K."/>
            <person name="Kumagai A."/>
            <person name="Itakura S."/>
            <person name="Fukuzumi Y."/>
            <person name="Fujimori Y."/>
            <person name="Komiyama M."/>
            <person name="Tashiro H."/>
            <person name="Tanigami A."/>
            <person name="Fujiwara T."/>
            <person name="Ono T."/>
            <person name="Yamada K."/>
            <person name="Fujii Y."/>
            <person name="Ozaki K."/>
            <person name="Hirao M."/>
            <person name="Ohmori Y."/>
            <person name="Kawabata A."/>
            <person name="Hikiji T."/>
            <person name="Kobatake N."/>
            <person name="Inagaki H."/>
            <person name="Ikema Y."/>
            <person name="Okamoto S."/>
            <person name="Okitani R."/>
            <person name="Kawakami T."/>
            <person name="Noguchi S."/>
            <person name="Itoh T."/>
            <person name="Shigeta K."/>
            <person name="Senba T."/>
            <person name="Matsumura K."/>
            <person name="Nakajima Y."/>
            <person name="Mizuno T."/>
            <person name="Morinaga M."/>
            <person name="Sasaki M."/>
            <person name="Togashi T."/>
            <person name="Oyama M."/>
            <person name="Hata H."/>
            <person name="Watanabe M."/>
            <person name="Komatsu T."/>
            <person name="Mizushima-Sugano J."/>
            <person name="Satoh T."/>
            <person name="Shirai Y."/>
            <person name="Takahashi Y."/>
            <person name="Nakagawa K."/>
            <person name="Okumura K."/>
            <person name="Nagase T."/>
            <person name="Nomura N."/>
            <person name="Kikuchi H."/>
            <person name="Masuho Y."/>
            <person name="Yamashita R."/>
            <person name="Nakai K."/>
            <person name="Yada T."/>
            <person name="Nakamura Y."/>
            <person name="Ohara O."/>
            <person name="Isogai T."/>
            <person name="Sugano S."/>
        </authorList>
    </citation>
    <scope>NUCLEOTIDE SEQUENCE [LARGE SCALE MRNA] (ISOFORMS 2 AND 3)</scope>
    <source>
        <tissue>Corpus callosum</tissue>
        <tissue>Uterus</tissue>
    </source>
</reference>
<reference key="7">
    <citation type="journal article" date="2006" name="Nature">
        <title>The DNA sequence, annotation and analysis of human chromosome 3.</title>
        <authorList>
            <person name="Muzny D.M."/>
            <person name="Scherer S.E."/>
            <person name="Kaul R."/>
            <person name="Wang J."/>
            <person name="Yu J."/>
            <person name="Sudbrak R."/>
            <person name="Buhay C.J."/>
            <person name="Chen R."/>
            <person name="Cree A."/>
            <person name="Ding Y."/>
            <person name="Dugan-Rocha S."/>
            <person name="Gill R."/>
            <person name="Gunaratne P."/>
            <person name="Harris R.A."/>
            <person name="Hawes A.C."/>
            <person name="Hernandez J."/>
            <person name="Hodgson A.V."/>
            <person name="Hume J."/>
            <person name="Jackson A."/>
            <person name="Khan Z.M."/>
            <person name="Kovar-Smith C."/>
            <person name="Lewis L.R."/>
            <person name="Lozado R.J."/>
            <person name="Metzker M.L."/>
            <person name="Milosavljevic A."/>
            <person name="Miner G.R."/>
            <person name="Morgan M.B."/>
            <person name="Nazareth L.V."/>
            <person name="Scott G."/>
            <person name="Sodergren E."/>
            <person name="Song X.-Z."/>
            <person name="Steffen D."/>
            <person name="Wei S."/>
            <person name="Wheeler D.A."/>
            <person name="Wright M.W."/>
            <person name="Worley K.C."/>
            <person name="Yuan Y."/>
            <person name="Zhang Z."/>
            <person name="Adams C.Q."/>
            <person name="Ansari-Lari M.A."/>
            <person name="Ayele M."/>
            <person name="Brown M.J."/>
            <person name="Chen G."/>
            <person name="Chen Z."/>
            <person name="Clendenning J."/>
            <person name="Clerc-Blankenburg K.P."/>
            <person name="Chen R."/>
            <person name="Chen Z."/>
            <person name="Davis C."/>
            <person name="Delgado O."/>
            <person name="Dinh H.H."/>
            <person name="Dong W."/>
            <person name="Draper H."/>
            <person name="Ernst S."/>
            <person name="Fu G."/>
            <person name="Gonzalez-Garay M.L."/>
            <person name="Garcia D.K."/>
            <person name="Gillett W."/>
            <person name="Gu J."/>
            <person name="Hao B."/>
            <person name="Haugen E."/>
            <person name="Havlak P."/>
            <person name="He X."/>
            <person name="Hennig S."/>
            <person name="Hu S."/>
            <person name="Huang W."/>
            <person name="Jackson L.R."/>
            <person name="Jacob L.S."/>
            <person name="Kelly S.H."/>
            <person name="Kube M."/>
            <person name="Levy R."/>
            <person name="Li Z."/>
            <person name="Liu B."/>
            <person name="Liu J."/>
            <person name="Liu W."/>
            <person name="Lu J."/>
            <person name="Maheshwari M."/>
            <person name="Nguyen B.-V."/>
            <person name="Okwuonu G.O."/>
            <person name="Palmeiri A."/>
            <person name="Pasternak S."/>
            <person name="Perez L.M."/>
            <person name="Phelps K.A."/>
            <person name="Plopper F.J."/>
            <person name="Qiang B."/>
            <person name="Raymond C."/>
            <person name="Rodriguez R."/>
            <person name="Saenphimmachak C."/>
            <person name="Santibanez J."/>
            <person name="Shen H."/>
            <person name="Shen Y."/>
            <person name="Subramanian S."/>
            <person name="Tabor P.E."/>
            <person name="Verduzco D."/>
            <person name="Waldron L."/>
            <person name="Wang J."/>
            <person name="Wang J."/>
            <person name="Wang Q."/>
            <person name="Williams G.A."/>
            <person name="Wong G.K.-S."/>
            <person name="Yao Z."/>
            <person name="Zhang J."/>
            <person name="Zhang X."/>
            <person name="Zhao G."/>
            <person name="Zhou J."/>
            <person name="Zhou Y."/>
            <person name="Nelson D."/>
            <person name="Lehrach H."/>
            <person name="Reinhardt R."/>
            <person name="Naylor S.L."/>
            <person name="Yang H."/>
            <person name="Olson M."/>
            <person name="Weinstock G."/>
            <person name="Gibbs R.A."/>
        </authorList>
    </citation>
    <scope>NUCLEOTIDE SEQUENCE [LARGE SCALE GENOMIC DNA]</scope>
</reference>
<reference key="8">
    <citation type="submission" date="2005-09" db="EMBL/GenBank/DDBJ databases">
        <authorList>
            <person name="Mural R.J."/>
            <person name="Istrail S."/>
            <person name="Sutton G.G."/>
            <person name="Florea L."/>
            <person name="Halpern A.L."/>
            <person name="Mobarry C.M."/>
            <person name="Lippert R."/>
            <person name="Walenz B."/>
            <person name="Shatkay H."/>
            <person name="Dew I."/>
            <person name="Miller J.R."/>
            <person name="Flanigan M.J."/>
            <person name="Edwards N.J."/>
            <person name="Bolanos R."/>
            <person name="Fasulo D."/>
            <person name="Halldorsson B.V."/>
            <person name="Hannenhalli S."/>
            <person name="Turner R."/>
            <person name="Yooseph S."/>
            <person name="Lu F."/>
            <person name="Nusskern D.R."/>
            <person name="Shue B.C."/>
            <person name="Zheng X.H."/>
            <person name="Zhong F."/>
            <person name="Delcher A.L."/>
            <person name="Huson D.H."/>
            <person name="Kravitz S.A."/>
            <person name="Mouchard L."/>
            <person name="Reinert K."/>
            <person name="Remington K.A."/>
            <person name="Clark A.G."/>
            <person name="Waterman M.S."/>
            <person name="Eichler E.E."/>
            <person name="Adams M.D."/>
            <person name="Hunkapiller M.W."/>
            <person name="Myers E.W."/>
            <person name="Venter J.C."/>
        </authorList>
    </citation>
    <scope>NUCLEOTIDE SEQUENCE [LARGE SCALE GENOMIC DNA]</scope>
</reference>
<reference key="9">
    <citation type="journal article" date="2004" name="Genome Res.">
        <title>The status, quality, and expansion of the NIH full-length cDNA project: the Mammalian Gene Collection (MGC).</title>
        <authorList>
            <consortium name="The MGC Project Team"/>
        </authorList>
    </citation>
    <scope>NUCLEOTIDE SEQUENCE [LARGE SCALE MRNA] (ISOFORM 1)</scope>
    <source>
        <tissue>Brain</tissue>
        <tissue>Kidney</tissue>
    </source>
</reference>
<reference key="10">
    <citation type="journal article" date="2000" name="Oncogene">
        <title>Yeast homolog of human SAG/ROC2/Rbx2/Hrt2 is essential for cell growth, but not for germination: chip profiling implicates its role in cell cycle regulation.</title>
        <authorList>
            <person name="Swaroop M."/>
            <person name="Wang Y."/>
            <person name="Miller P."/>
            <person name="Duan H."/>
            <person name="Jatkoe T."/>
            <person name="Madore S.J."/>
            <person name="Sun Y."/>
        </authorList>
    </citation>
    <scope>INTERACTION WITH CUL1</scope>
</reference>
<reference key="11">
    <citation type="journal article" date="2003" name="J. Biol. Chem.">
        <title>Phosphorylation of threonine 10 on CKBBP1/SAG/ROC2/Rbx2 by protein kinase CKII promotes the degradation of IkappaBalpha and p27Kip1.</title>
        <authorList>
            <person name="Kim Y.-S."/>
            <person name="Lee J.-Y."/>
            <person name="Son M.-Y."/>
            <person name="Park W."/>
            <person name="Bae Y.-S."/>
        </authorList>
    </citation>
    <scope>PHOSPHORYLATION AT THR-10 BY CK2</scope>
</reference>
<reference key="12">
    <citation type="journal article" date="2007" name="Mol. Cell. Biochem.">
        <title>CK2 phosphorylation of SAG at Thr10 regulates SAG stability, but not its E3 ligase activity.</title>
        <authorList>
            <person name="He H."/>
            <person name="Tan M."/>
            <person name="Pamarthy D."/>
            <person name="Wang G."/>
            <person name="Ahmed K."/>
            <person name="Sun Y."/>
        </authorList>
    </citation>
    <scope>CATALYTIC ACTIVITY</scope>
    <scope>SUBCELLULAR LOCATION</scope>
    <scope>PHOSPHORYLATION AT THR-10</scope>
    <scope>MUTAGENESIS OF THR-10</scope>
</reference>
<reference key="13">
    <citation type="journal article" date="2009" name="Anal. Chem.">
        <title>Lys-N and trypsin cover complementary parts of the phosphoproteome in a refined SCX-based approach.</title>
        <authorList>
            <person name="Gauci S."/>
            <person name="Helbig A.O."/>
            <person name="Slijper M."/>
            <person name="Krijgsveld J."/>
            <person name="Heck A.J."/>
            <person name="Mohammed S."/>
        </authorList>
    </citation>
    <scope>ACETYLATION [LARGE SCALE ANALYSIS] AT ALA-2</scope>
    <scope>CLEAVAGE OF INITIATOR METHIONINE [LARGE SCALE ANALYSIS]</scope>
    <scope>IDENTIFICATION BY MASS SPECTROMETRY [LARGE SCALE ANALYSIS]</scope>
</reference>
<reference key="14">
    <citation type="journal article" date="2009" name="Mol. Cell">
        <title>E2-RING expansion of the NEDD8 cascade confers specificity to cullin modification.</title>
        <authorList>
            <person name="Huang D.T."/>
            <person name="Ayrault O."/>
            <person name="Hunt H.W."/>
            <person name="Taherbhoy A.M."/>
            <person name="Duda D.M."/>
            <person name="Scott D.C."/>
            <person name="Borg L.A."/>
            <person name="Neale G."/>
            <person name="Murray P.J."/>
            <person name="Roussel M.F."/>
            <person name="Schulman B.A."/>
        </authorList>
    </citation>
    <scope>FUNCTION</scope>
    <scope>CATALYTIC ACTIVITY</scope>
    <scope>INTERACTION WITH UBE2F</scope>
</reference>
<reference key="15">
    <citation type="journal article" date="2012" name="PLoS Pathog.">
        <title>Inhibition of a NEDD8 Cascade Restores Restriction of HIV by APOBEC3G.</title>
        <authorList>
            <person name="Stanley D.J."/>
            <person name="Bartholomeeusen K."/>
            <person name="Crosby D.C."/>
            <person name="Kim D.Y."/>
            <person name="Kwon E."/>
            <person name="Yen L."/>
            <person name="Cartozo N.C."/>
            <person name="Li M."/>
            <person name="Jaeger S."/>
            <person name="Mason-Herr J."/>
            <person name="Hayashi F."/>
            <person name="Yokoyama S."/>
            <person name="Krogan N.J."/>
            <person name="Harris R.S."/>
            <person name="Peterlin B.M."/>
            <person name="Gross J.D."/>
        </authorList>
    </citation>
    <scope>FUNCTION (MICROBIAL INFECTION)</scope>
    <scope>CATALYTIC ACTIVITY</scope>
    <scope>PATHWAY</scope>
</reference>
<reference key="16">
    <citation type="journal article" date="2014" name="J. Biol. Chem.">
        <title>Protein interaction screening for the ankyrin repeats and suppressor of cytokine signaling (SOCS) box (ASB) family identify Asb11 as a novel endoplasmic reticulum resident ubiquitin ligase.</title>
        <authorList>
            <person name="Andresen C.A."/>
            <person name="Smedegaard S."/>
            <person name="Sylvestersen K.B."/>
            <person name="Svensson C."/>
            <person name="Iglesias-Gato D."/>
            <person name="Cazzamali G."/>
            <person name="Nielsen T.K."/>
            <person name="Nielsen M.L."/>
            <person name="Flores-Morales A."/>
        </authorList>
    </citation>
    <scope>IDENTIFICATION IN THE ECS(ASB11) COMPLEX</scope>
</reference>
<reference key="17">
    <citation type="journal article" date="2016" name="J. Cell Sci.">
        <title>Characterization of the mammalian family of DCN-type NEDD8 E3 ligases.</title>
        <authorList>
            <person name="Keuss M.J."/>
            <person name="Thomas Y."/>
            <person name="Mcarthur R."/>
            <person name="Wood N.T."/>
            <person name="Knebel A."/>
            <person name="Kurz T."/>
        </authorList>
    </citation>
    <scope>INTERACTION WITH DCUN1D1; DCUN1D2; DCUN1D3; DCUN1D4 AND DCUN1D5</scope>
</reference>
<reference key="18">
    <citation type="journal article" date="2011" name="Nature">
        <title>Vif hijacks CBF-beta to degrade APOBEC3G and promote HIV-1 infection.</title>
        <authorList>
            <person name="Jaeger S."/>
            <person name="Kim D.Y."/>
            <person name="Hultquist J.F."/>
            <person name="Shindo K."/>
            <person name="LaRue R.S."/>
            <person name="Kwon E."/>
            <person name="Li M."/>
            <person name="Anderson B.D."/>
            <person name="Yen L."/>
            <person name="Stanley D."/>
            <person name="Mahon C."/>
            <person name="Kane J."/>
            <person name="Franks-Skiba K."/>
            <person name="Cimermancic P."/>
            <person name="Burlingame A."/>
            <person name="Sali A."/>
            <person name="Craik C.S."/>
            <person name="Harris R.S."/>
            <person name="Gross J.D."/>
            <person name="Krogan N.J."/>
        </authorList>
    </citation>
    <scope>FUNCTION (MICROBIAL INFECTION)</scope>
    <scope>IDENTIFICATION IN AN ECS COMPLEX (MICROBIAL INFECTION)</scope>
</reference>
<reference key="19">
    <citation type="journal article" date="2011" name="PLoS ONE">
        <title>The SOCS2 ubiquitin ligase complex regulates growth hormone receptor levels.</title>
        <authorList>
            <person name="Vesterlund M."/>
            <person name="Zadjali F."/>
            <person name="Persson T."/>
            <person name="Nielsen M.L."/>
            <person name="Kessler B.M."/>
            <person name="Norstedt G."/>
            <person name="Flores-Morales A."/>
        </authorList>
    </citation>
    <scope>FUNCTION</scope>
    <scope>IDENTIFICATION IN THE ECS(SOCS2) COMPLEX</scope>
    <scope>PATHWAY</scope>
</reference>
<reference key="20">
    <citation type="journal article" date="2015" name="J. Biol. Chem.">
        <title>Biophysical studies on interactions and assembly of full-size E3 ubiquitin ligase: suppressor of cytokine signaling 2 (SOCS2)-elongin BC-cullin 5-ring box protein 2 (RBX2).</title>
        <authorList>
            <person name="Bulatov E."/>
            <person name="Martin E.M."/>
            <person name="Chatterjee S."/>
            <person name="Knebel A."/>
            <person name="Shimamura S."/>
            <person name="Konijnenberg A."/>
            <person name="Johnson C."/>
            <person name="Zinn N."/>
            <person name="Grandi P."/>
            <person name="Sobott F."/>
            <person name="Ciulli A."/>
        </authorList>
    </citation>
    <scope>FUNCTION</scope>
    <scope>PATHWAY</scope>
    <scope>IDENTIFICATION IN THE ECS(SOCS2) COMPLEX</scope>
</reference>
<reference key="21">
    <citation type="journal article" date="2016" name="Sci. Rep.">
        <title>SAG/RBX2 E3 ligase complexes with UBCH10 and UBE2S E2s to ubiquitylate beta-TrCP1 via K11-linkage for degradation.</title>
        <authorList>
            <person name="Kuang P."/>
            <person name="Tan M."/>
            <person name="Zhou W."/>
            <person name="Zhang Q."/>
            <person name="Sun Y."/>
        </authorList>
    </citation>
    <scope>FUNCTION</scope>
    <scope>PATHWAY</scope>
    <scope>IDENTIFICATION IN AN ECS COMPLEX</scope>
</reference>
<reference key="22">
    <citation type="journal article" date="2019" name="J. Cell Biol.">
        <title>BIK ubiquitination by the E3 ligase Cul5-ASB11 determines cell fate during cellular stress.</title>
        <authorList>
            <person name="Chen F.Y."/>
            <person name="Huang M.Y."/>
            <person name="Lin Y.M."/>
            <person name="Ho C.H."/>
            <person name="Lin S.Y."/>
            <person name="Chen H.Y."/>
            <person name="Hung M.C."/>
            <person name="Chen R.H."/>
        </authorList>
    </citation>
    <scope>IDENTIFICATION IN THE ECS(ASB11) COMPLEX</scope>
</reference>
<reference key="23">
    <citation type="journal article" date="2021" name="Mol. Cell. Proteomics">
        <title>The mechanism of NEDD8 activation of CUL5 Ubiquitin E3 ligases.</title>
        <authorList>
            <person name="Lumpkin R.J."/>
            <person name="Ahmad A.S."/>
            <person name="Blake R."/>
            <person name="Condon C.J."/>
            <person name="Komives E.A."/>
        </authorList>
    </citation>
    <scope>FUNCTION</scope>
    <scope>CATALYTIC ACTIVITY</scope>
    <scope>PATHWAY</scope>
    <scope>IDENTIFICATION IN THE ECS(ASB9) COMPLEX</scope>
</reference>
<reference key="24">
    <citation type="journal article" date="2022" name="Life. Sci Alliance">
        <title>Rab40c regulates focal adhesions and PP6 activity by controlling ANKRD28 ubiquitylation.</title>
        <authorList>
            <person name="Han K.J."/>
            <person name="Mikalayeva V."/>
            <person name="Gerber S.A."/>
            <person name="Kettenbach A.N."/>
            <person name="Skeberdis V.A."/>
            <person name="Prekeris R."/>
        </authorList>
    </citation>
    <scope>FUNCTION</scope>
    <scope>IDENTIFICATION IN THE ECS(RAB40C) COMPLEX</scope>
</reference>
<reference key="25">
    <citation type="journal article" date="2024" name="Dev. Cell">
        <title>The UBE2F-CRL5ASB11-DIRAS2 axis is an oncogene and tumor suppressor cascade in pancreatic cancer cells.</title>
        <authorList>
            <person name="Chang Y."/>
            <person name="Chen Q."/>
            <person name="Li H."/>
            <person name="Xu J."/>
            <person name="Tan M."/>
            <person name="Xiong X."/>
            <person name="Sun Y."/>
        </authorList>
    </citation>
    <scope>FUNCTION</scope>
    <scope>PATHWAY</scope>
    <scope>IDENTIFICATION IN THE ECS(ASB11) COMPLEX</scope>
</reference>
<reference key="26">
    <citation type="journal article" date="2024" name="Nature">
        <title>The CRL5-SPSB3 ubiquitin ligase targets nuclear cGAS for degradation.</title>
        <authorList>
            <person name="Xu P."/>
            <person name="Liu Y."/>
            <person name="Liu C."/>
            <person name="Guey B."/>
            <person name="Li L."/>
            <person name="Melenec P."/>
            <person name="Ricci J."/>
            <person name="Ablasser A."/>
        </authorList>
    </citation>
    <scope>FUNCTION</scope>
    <scope>PATHWAY</scope>
    <scope>IDENTIFICATION IN THE ECS(SPSB3) COMPLEX</scope>
</reference>
<reference key="27">
    <citation type="submission" date="2007-08" db="PDB data bank">
        <title>Solution structure of the RING domain of the human RING-box protein 2.</title>
        <authorList>
            <consortium name="RIKEN structural genomics initiative (RSGI)"/>
        </authorList>
    </citation>
    <scope>STRUCTURE BY NMR OF 40-113</scope>
</reference>
<reference evidence="32" key="28">
    <citation type="journal article" date="2021" name="Nat. Chem. Biol.">
        <title>CUL5-ARIH2 E3-E3 ubiquitin ligase structure reveals cullin-specific NEDD8 activation.</title>
        <authorList>
            <person name="Kostrhon S."/>
            <person name="Prabu J.R."/>
            <person name="Baek K."/>
            <person name="Horn-Ghetko D."/>
            <person name="von Gronau S."/>
            <person name="Kluegel M."/>
            <person name="Basquin J."/>
            <person name="Alpi A.F."/>
            <person name="Schulman B.A."/>
        </authorList>
    </citation>
    <scope>STRUCTURE BY ELECTRON MICROSCOPY (3.40 ANGSTROMS) OF 5-113 IN COMPLEX WITH CUL5; ARIH2 AND ZINC</scope>
    <scope>FUNCTION</scope>
</reference>
<gene>
    <name evidence="31" type="primary">RNF7</name>
    <name evidence="27" type="synonym">RBX2</name>
    <name evidence="25" type="synonym">ROC2</name>
    <name evidence="26" type="synonym">SAG</name>
</gene>
<proteinExistence type="evidence at protein level"/>
<accession>Q9UBF6</accession>
<accession>A8K1H9</accession>
<accession>A8MTB5</accession>
<accession>C9JYL3</accession>
<accession>D3DNF7</accession>
<accession>D3DNF8</accession>
<accession>Q9BXN8</accession>
<accession>Q9Y5M7</accession>
<name>RBX2_HUMAN</name>
<evidence type="ECO:0000250" key="1">
    <source>
        <dbReference type="UniProtKB" id="Q9WTZ1"/>
    </source>
</evidence>
<evidence type="ECO:0000255" key="2">
    <source>
        <dbReference type="PROSITE-ProRule" id="PRU00175"/>
    </source>
</evidence>
<evidence type="ECO:0000256" key="3">
    <source>
        <dbReference type="SAM" id="MobiDB-lite"/>
    </source>
</evidence>
<evidence type="ECO:0000269" key="4">
    <source>
    </source>
</evidence>
<evidence type="ECO:0000269" key="5">
    <source>
    </source>
</evidence>
<evidence type="ECO:0000269" key="6">
    <source>
    </source>
</evidence>
<evidence type="ECO:0000269" key="7">
    <source>
    </source>
</evidence>
<evidence type="ECO:0000269" key="8">
    <source>
    </source>
</evidence>
<evidence type="ECO:0000269" key="9">
    <source>
    </source>
</evidence>
<evidence type="ECO:0000269" key="10">
    <source>
    </source>
</evidence>
<evidence type="ECO:0000269" key="11">
    <source>
    </source>
</evidence>
<evidence type="ECO:0000269" key="12">
    <source>
    </source>
</evidence>
<evidence type="ECO:0000269" key="13">
    <source>
    </source>
</evidence>
<evidence type="ECO:0000269" key="14">
    <source>
    </source>
</evidence>
<evidence type="ECO:0000269" key="15">
    <source>
    </source>
</evidence>
<evidence type="ECO:0000269" key="16">
    <source>
    </source>
</evidence>
<evidence type="ECO:0000269" key="17">
    <source>
    </source>
</evidence>
<evidence type="ECO:0000269" key="18">
    <source>
    </source>
</evidence>
<evidence type="ECO:0000269" key="19">
    <source>
    </source>
</evidence>
<evidence type="ECO:0000269" key="20">
    <source>
    </source>
</evidence>
<evidence type="ECO:0000269" key="21">
    <source>
    </source>
</evidence>
<evidence type="ECO:0000269" key="22">
    <source>
    </source>
</evidence>
<evidence type="ECO:0000269" key="23">
    <source>
    </source>
</evidence>
<evidence type="ECO:0000269" key="24">
    <source>
    </source>
</evidence>
<evidence type="ECO:0000303" key="25">
    <source>
    </source>
</evidence>
<evidence type="ECO:0000303" key="26">
    <source>
    </source>
</evidence>
<evidence type="ECO:0000303" key="27">
    <source>
    </source>
</evidence>
<evidence type="ECO:0000303" key="28">
    <source>
    </source>
</evidence>
<evidence type="ECO:0000303" key="29">
    <source>
    </source>
</evidence>
<evidence type="ECO:0000305" key="30"/>
<evidence type="ECO:0000312" key="31">
    <source>
        <dbReference type="HGNC" id="HGNC:10070"/>
    </source>
</evidence>
<evidence type="ECO:0007744" key="32">
    <source>
        <dbReference type="PDB" id="7ONI"/>
    </source>
</evidence>
<evidence type="ECO:0007744" key="33">
    <source>
    </source>
</evidence>
<evidence type="ECO:0007829" key="34">
    <source>
        <dbReference type="PDB" id="2ECL"/>
    </source>
</evidence>
<evidence type="ECO:0007829" key="35">
    <source>
        <dbReference type="PDB" id="7ONI"/>
    </source>
</evidence>
<sequence length="113" mass="12683">MADVEDGEETCALASHSGSSGSKSGGDKMFSLKKWNAVAMWSWDVECDTCAICRVQVMDACLRCQAENKQEDCVVVWGECNHSFHNCCMSLWVKQNNRCPLCQQDWVVQRIGK</sequence>